<accession>Q53VV5</accession>
<protein>
    <recommendedName>
        <fullName evidence="1">CRISPR-associated endonuclease Cas1 3</fullName>
        <ecNumber evidence="1">3.1.-.-</ecNumber>
    </recommendedName>
</protein>
<gene>
    <name evidence="1" type="primary">cas1-3</name>
    <name type="ordered locus">TTHB224</name>
</gene>
<keyword id="KW-0051">Antiviral defense</keyword>
<keyword id="KW-0238">DNA-binding</keyword>
<keyword id="KW-0255">Endonuclease</keyword>
<keyword id="KW-0378">Hydrolase</keyword>
<keyword id="KW-0460">Magnesium</keyword>
<keyword id="KW-0464">Manganese</keyword>
<keyword id="KW-0479">Metal-binding</keyword>
<keyword id="KW-0540">Nuclease</keyword>
<keyword id="KW-0614">Plasmid</keyword>
<keyword id="KW-1185">Reference proteome</keyword>
<organism>
    <name type="scientific">Thermus thermophilus (strain ATCC 27634 / DSM 579 / HB8)</name>
    <dbReference type="NCBI Taxonomy" id="300852"/>
    <lineage>
        <taxon>Bacteria</taxon>
        <taxon>Thermotogati</taxon>
        <taxon>Deinococcota</taxon>
        <taxon>Deinococci</taxon>
        <taxon>Thermales</taxon>
        <taxon>Thermaceae</taxon>
        <taxon>Thermus</taxon>
    </lineage>
</organism>
<sequence>MAEGGGGVGVVYVLENEAYLSKEGGTLKVSRRAGREVLLQKPLIAVEEIVILGNAVVTPALLKHCAQEGVGIHYLSPTGTYYAGLTRTPSKNAPARVAQFKAYLEPTWKLALAQRFVLGKIRNGLVFLRRNGAEGWERLKEALLEAERAQDEEALRGAEGRAADLYFRAFAELLPEEFAFGERSRRPPRDPANSLLSLAYTLLAKECESALLVAGLDPYVGYLHEVRYGRPSLALDLMEEFRSVLADSVVLSLLNNRRVTLEDFDDSEGFPRLRKEAWPKFLRAWEGRLNERIQHPLLGKRLAYREILLAQARILVKHLLGELPRYEPFAVR</sequence>
<geneLocation type="plasmid">
    <name>pTT27</name>
</geneLocation>
<reference key="1">
    <citation type="submission" date="2004-11" db="EMBL/GenBank/DDBJ databases">
        <title>Complete genome sequence of Thermus thermophilus HB8.</title>
        <authorList>
            <person name="Masui R."/>
            <person name="Kurokawa K."/>
            <person name="Nakagawa N."/>
            <person name="Tokunaga F."/>
            <person name="Koyama Y."/>
            <person name="Shibata T."/>
            <person name="Oshima T."/>
            <person name="Yokoyama S."/>
            <person name="Yasunaga T."/>
            <person name="Kuramitsu S."/>
        </authorList>
    </citation>
    <scope>NUCLEOTIDE SEQUENCE [LARGE SCALE GENOMIC DNA]</scope>
    <source>
        <strain>ATCC 27634 / DSM 579 / HB8</strain>
    </source>
</reference>
<comment type="function">
    <text evidence="1">CRISPR (clustered regularly interspaced short palindromic repeat), is an adaptive immune system that provides protection against mobile genetic elements (viruses, transposable elements and conjugative plasmids). CRISPR clusters contain spacers, sequences complementary to antecedent mobile elements, and target invading nucleic acids. CRISPR clusters are transcribed and processed into CRISPR RNA (crRNA). Acts as a dsDNA endonuclease. Involved in the integration of spacer DNA into the CRISPR cassette.</text>
</comment>
<comment type="cofactor">
    <cofactor evidence="1">
        <name>Mg(2+)</name>
        <dbReference type="ChEBI" id="CHEBI:18420"/>
    </cofactor>
    <cofactor evidence="1">
        <name>Mn(2+)</name>
        <dbReference type="ChEBI" id="CHEBI:29035"/>
    </cofactor>
</comment>
<comment type="subunit">
    <text evidence="1">Homodimer, forms a heterotetramer with a Cas2 homodimer.</text>
</comment>
<comment type="similarity">
    <text evidence="1">Belongs to the CRISPR-associated endonuclease Cas1 family.</text>
</comment>
<name>CAS1C_THET8</name>
<evidence type="ECO:0000255" key="1">
    <source>
        <dbReference type="HAMAP-Rule" id="MF_01470"/>
    </source>
</evidence>
<feature type="chain" id="PRO_0000417092" description="CRISPR-associated endonuclease Cas1 3">
    <location>
        <begin position="1"/>
        <end position="332"/>
    </location>
</feature>
<feature type="binding site" evidence="1">
    <location>
        <position position="159"/>
    </location>
    <ligand>
        <name>Mn(2+)</name>
        <dbReference type="ChEBI" id="CHEBI:29035"/>
    </ligand>
</feature>
<feature type="binding site" evidence="1">
    <location>
        <position position="224"/>
    </location>
    <ligand>
        <name>Mn(2+)</name>
        <dbReference type="ChEBI" id="CHEBI:29035"/>
    </ligand>
</feature>
<feature type="binding site" evidence="1">
    <location>
        <position position="239"/>
    </location>
    <ligand>
        <name>Mn(2+)</name>
        <dbReference type="ChEBI" id="CHEBI:29035"/>
    </ligand>
</feature>
<dbReference type="EC" id="3.1.-.-" evidence="1"/>
<dbReference type="EMBL" id="AP008227">
    <property type="protein sequence ID" value="BAD72020.1"/>
    <property type="molecule type" value="Genomic_DNA"/>
</dbReference>
<dbReference type="RefSeq" id="YP_145463.1">
    <property type="nucleotide sequence ID" value="NC_006462.1"/>
</dbReference>
<dbReference type="SMR" id="Q53VV5"/>
<dbReference type="EnsemblBacteria" id="BAD72020">
    <property type="protein sequence ID" value="BAD72020"/>
    <property type="gene ID" value="BAD72020"/>
</dbReference>
<dbReference type="KEGG" id="ttj:TTHB224"/>
<dbReference type="PATRIC" id="fig|300852.9.peg.2178"/>
<dbReference type="HOGENOM" id="CLU_052779_1_0_0"/>
<dbReference type="PhylomeDB" id="Q53VV5"/>
<dbReference type="Proteomes" id="UP000000532">
    <property type="component" value="Plasmid pTT27"/>
</dbReference>
<dbReference type="GO" id="GO:0003677">
    <property type="term" value="F:DNA binding"/>
    <property type="evidence" value="ECO:0007669"/>
    <property type="project" value="UniProtKB-KW"/>
</dbReference>
<dbReference type="GO" id="GO:0004519">
    <property type="term" value="F:endonuclease activity"/>
    <property type="evidence" value="ECO:0007669"/>
    <property type="project" value="UniProtKB-UniRule"/>
</dbReference>
<dbReference type="GO" id="GO:0046872">
    <property type="term" value="F:metal ion binding"/>
    <property type="evidence" value="ECO:0007669"/>
    <property type="project" value="UniProtKB-UniRule"/>
</dbReference>
<dbReference type="GO" id="GO:0051607">
    <property type="term" value="P:defense response to virus"/>
    <property type="evidence" value="ECO:0007669"/>
    <property type="project" value="UniProtKB-UniRule"/>
</dbReference>
<dbReference type="GO" id="GO:0043571">
    <property type="term" value="P:maintenance of CRISPR repeat elements"/>
    <property type="evidence" value="ECO:0007669"/>
    <property type="project" value="UniProtKB-UniRule"/>
</dbReference>
<dbReference type="CDD" id="cd09634">
    <property type="entry name" value="Cas1_I-II-III"/>
    <property type="match status" value="1"/>
</dbReference>
<dbReference type="Gene3D" id="1.20.120.920">
    <property type="entry name" value="CRISPR-associated endonuclease Cas1, C-terminal domain"/>
    <property type="match status" value="1"/>
</dbReference>
<dbReference type="Gene3D" id="3.100.10.20">
    <property type="entry name" value="CRISPR-associated endonuclease Cas1, N-terminal domain"/>
    <property type="match status" value="1"/>
</dbReference>
<dbReference type="HAMAP" id="MF_01470">
    <property type="entry name" value="Cas1"/>
    <property type="match status" value="1"/>
</dbReference>
<dbReference type="InterPro" id="IPR050646">
    <property type="entry name" value="Cas1"/>
</dbReference>
<dbReference type="InterPro" id="IPR002729">
    <property type="entry name" value="CRISPR-assoc_Cas1"/>
</dbReference>
<dbReference type="InterPro" id="IPR042206">
    <property type="entry name" value="CRISPR-assoc_Cas1_C"/>
</dbReference>
<dbReference type="InterPro" id="IPR042211">
    <property type="entry name" value="CRISPR-assoc_Cas1_N"/>
</dbReference>
<dbReference type="NCBIfam" id="TIGR00287">
    <property type="entry name" value="cas1"/>
    <property type="match status" value="1"/>
</dbReference>
<dbReference type="PANTHER" id="PTHR34353">
    <property type="entry name" value="CRISPR-ASSOCIATED ENDONUCLEASE CAS1 1"/>
    <property type="match status" value="1"/>
</dbReference>
<dbReference type="PANTHER" id="PTHR34353:SF2">
    <property type="entry name" value="CRISPR-ASSOCIATED ENDONUCLEASE CAS1 1"/>
    <property type="match status" value="1"/>
</dbReference>
<dbReference type="Pfam" id="PF01867">
    <property type="entry name" value="Cas_Cas1"/>
    <property type="match status" value="1"/>
</dbReference>
<proteinExistence type="inferred from homology"/>